<name>GATB_CERS4</name>
<proteinExistence type="inferred from homology"/>
<gene>
    <name evidence="1" type="primary">gatB</name>
    <name type="ordered locus">RHOS4_05680</name>
    <name type="ORF">RSP_1986</name>
</gene>
<evidence type="ECO:0000255" key="1">
    <source>
        <dbReference type="HAMAP-Rule" id="MF_00121"/>
    </source>
</evidence>
<feature type="chain" id="PRO_0000241265" description="Aspartyl/glutamyl-tRNA(Asn/Gln) amidotransferase subunit B">
    <location>
        <begin position="1"/>
        <end position="503"/>
    </location>
</feature>
<reference key="1">
    <citation type="submission" date="2005-09" db="EMBL/GenBank/DDBJ databases">
        <title>Complete sequence of chromosome 1 of Rhodobacter sphaeroides 2.4.1.</title>
        <authorList>
            <person name="Copeland A."/>
            <person name="Lucas S."/>
            <person name="Lapidus A."/>
            <person name="Barry K."/>
            <person name="Detter J.C."/>
            <person name="Glavina T."/>
            <person name="Hammon N."/>
            <person name="Israni S."/>
            <person name="Pitluck S."/>
            <person name="Richardson P."/>
            <person name="Mackenzie C."/>
            <person name="Choudhary M."/>
            <person name="Larimer F."/>
            <person name="Hauser L.J."/>
            <person name="Land M."/>
            <person name="Donohue T.J."/>
            <person name="Kaplan S."/>
        </authorList>
    </citation>
    <scope>NUCLEOTIDE SEQUENCE [LARGE SCALE GENOMIC DNA]</scope>
    <source>
        <strain>ATCC 17023 / DSM 158 / JCM 6121 / CCUG 31486 / LMG 2827 / NBRC 12203 / NCIMB 8253 / ATH 2.4.1.</strain>
    </source>
</reference>
<dbReference type="EC" id="6.3.5.-" evidence="1"/>
<dbReference type="EMBL" id="CP000143">
    <property type="protein sequence ID" value="ABA78136.1"/>
    <property type="molecule type" value="Genomic_DNA"/>
</dbReference>
<dbReference type="RefSeq" id="WP_011337137.1">
    <property type="nucleotide sequence ID" value="NZ_CP030271.1"/>
</dbReference>
<dbReference type="RefSeq" id="YP_352037.1">
    <property type="nucleotide sequence ID" value="NC_007493.2"/>
</dbReference>
<dbReference type="SMR" id="Q3J4Z8"/>
<dbReference type="STRING" id="272943.RSP_1986"/>
<dbReference type="EnsemblBacteria" id="ABA78136">
    <property type="protein sequence ID" value="ABA78136"/>
    <property type="gene ID" value="RSP_1986"/>
</dbReference>
<dbReference type="GeneID" id="3719319"/>
<dbReference type="KEGG" id="rsp:RSP_1986"/>
<dbReference type="PATRIC" id="fig|272943.9.peg.875"/>
<dbReference type="eggNOG" id="COG0064">
    <property type="taxonomic scope" value="Bacteria"/>
</dbReference>
<dbReference type="OrthoDB" id="9804078at2"/>
<dbReference type="PhylomeDB" id="Q3J4Z8"/>
<dbReference type="Proteomes" id="UP000002703">
    <property type="component" value="Chromosome 1"/>
</dbReference>
<dbReference type="GO" id="GO:0050566">
    <property type="term" value="F:asparaginyl-tRNA synthase (glutamine-hydrolyzing) activity"/>
    <property type="evidence" value="ECO:0007669"/>
    <property type="project" value="RHEA"/>
</dbReference>
<dbReference type="GO" id="GO:0005524">
    <property type="term" value="F:ATP binding"/>
    <property type="evidence" value="ECO:0007669"/>
    <property type="project" value="UniProtKB-KW"/>
</dbReference>
<dbReference type="GO" id="GO:0050567">
    <property type="term" value="F:glutaminyl-tRNA synthase (glutamine-hydrolyzing) activity"/>
    <property type="evidence" value="ECO:0007669"/>
    <property type="project" value="UniProtKB-UniRule"/>
</dbReference>
<dbReference type="GO" id="GO:0070681">
    <property type="term" value="P:glutaminyl-tRNAGln biosynthesis via transamidation"/>
    <property type="evidence" value="ECO:0007669"/>
    <property type="project" value="TreeGrafter"/>
</dbReference>
<dbReference type="GO" id="GO:0006412">
    <property type="term" value="P:translation"/>
    <property type="evidence" value="ECO:0007669"/>
    <property type="project" value="UniProtKB-UniRule"/>
</dbReference>
<dbReference type="FunFam" id="1.10.10.410:FF:000001">
    <property type="entry name" value="Aspartyl/glutamyl-tRNA(Asn/Gln) amidotransferase subunit B"/>
    <property type="match status" value="1"/>
</dbReference>
<dbReference type="FunFam" id="1.10.150.380:FF:000001">
    <property type="entry name" value="Aspartyl/glutamyl-tRNA(Asn/Gln) amidotransferase subunit B"/>
    <property type="match status" value="1"/>
</dbReference>
<dbReference type="Gene3D" id="1.10.10.410">
    <property type="match status" value="1"/>
</dbReference>
<dbReference type="Gene3D" id="1.10.150.380">
    <property type="entry name" value="GatB domain, N-terminal subdomain"/>
    <property type="match status" value="1"/>
</dbReference>
<dbReference type="HAMAP" id="MF_00121">
    <property type="entry name" value="GatB"/>
    <property type="match status" value="1"/>
</dbReference>
<dbReference type="InterPro" id="IPR017959">
    <property type="entry name" value="Asn/Gln-tRNA_amidoTrfase_suB/E"/>
</dbReference>
<dbReference type="InterPro" id="IPR006075">
    <property type="entry name" value="Asn/Gln-tRNA_Trfase_suB/E_cat"/>
</dbReference>
<dbReference type="InterPro" id="IPR018027">
    <property type="entry name" value="Asn/Gln_amidotransferase"/>
</dbReference>
<dbReference type="InterPro" id="IPR003789">
    <property type="entry name" value="Asn/Gln_tRNA_amidoTrase-B-like"/>
</dbReference>
<dbReference type="InterPro" id="IPR004413">
    <property type="entry name" value="GatB"/>
</dbReference>
<dbReference type="InterPro" id="IPR042114">
    <property type="entry name" value="GatB_C_1"/>
</dbReference>
<dbReference type="InterPro" id="IPR023168">
    <property type="entry name" value="GatB_Yqey_C_2"/>
</dbReference>
<dbReference type="InterPro" id="IPR017958">
    <property type="entry name" value="Gln-tRNA_amidoTrfase_suB_CS"/>
</dbReference>
<dbReference type="InterPro" id="IPR014746">
    <property type="entry name" value="Gln_synth/guanido_kin_cat_dom"/>
</dbReference>
<dbReference type="NCBIfam" id="TIGR00133">
    <property type="entry name" value="gatB"/>
    <property type="match status" value="1"/>
</dbReference>
<dbReference type="NCBIfam" id="NF004012">
    <property type="entry name" value="PRK05477.1-2"/>
    <property type="match status" value="1"/>
</dbReference>
<dbReference type="NCBIfam" id="NF004014">
    <property type="entry name" value="PRK05477.1-4"/>
    <property type="match status" value="1"/>
</dbReference>
<dbReference type="NCBIfam" id="NF004015">
    <property type="entry name" value="PRK05477.1-5"/>
    <property type="match status" value="1"/>
</dbReference>
<dbReference type="PANTHER" id="PTHR11659">
    <property type="entry name" value="GLUTAMYL-TRNA GLN AMIDOTRANSFERASE SUBUNIT B MITOCHONDRIAL AND PROKARYOTIC PET112-RELATED"/>
    <property type="match status" value="1"/>
</dbReference>
<dbReference type="PANTHER" id="PTHR11659:SF0">
    <property type="entry name" value="GLUTAMYL-TRNA(GLN) AMIDOTRANSFERASE SUBUNIT B, MITOCHONDRIAL"/>
    <property type="match status" value="1"/>
</dbReference>
<dbReference type="Pfam" id="PF02934">
    <property type="entry name" value="GatB_N"/>
    <property type="match status" value="1"/>
</dbReference>
<dbReference type="Pfam" id="PF02637">
    <property type="entry name" value="GatB_Yqey"/>
    <property type="match status" value="1"/>
</dbReference>
<dbReference type="SMART" id="SM00845">
    <property type="entry name" value="GatB_Yqey"/>
    <property type="match status" value="1"/>
</dbReference>
<dbReference type="SUPFAM" id="SSF89095">
    <property type="entry name" value="GatB/YqeY motif"/>
    <property type="match status" value="1"/>
</dbReference>
<dbReference type="SUPFAM" id="SSF55931">
    <property type="entry name" value="Glutamine synthetase/guanido kinase"/>
    <property type="match status" value="1"/>
</dbReference>
<dbReference type="PROSITE" id="PS01234">
    <property type="entry name" value="GATB"/>
    <property type="match status" value="1"/>
</dbReference>
<keyword id="KW-0067">ATP-binding</keyword>
<keyword id="KW-0436">Ligase</keyword>
<keyword id="KW-0547">Nucleotide-binding</keyword>
<keyword id="KW-0648">Protein biosynthesis</keyword>
<keyword id="KW-1185">Reference proteome</keyword>
<accession>Q3J4Z8</accession>
<sequence length="503" mass="55080">MLDLTYEAPKPKVIAGAKHDWELVIGMEIHAQVSSNAKLFSGASTTFGAEPNSNVSFVDCAMPGMLPVINEFCVAQAVRTGLGLKAQINLVSAFDRKNYFYPDLPQGYQISQLYHPIVGEGEVLVELAPGIARLVRIERIHLEQDAGKSIHDMDPNLSFVDFNRTGVALMEIVSRPDIRGPEEAAAYVAKLRQILRYLGTCDGNMQNGNLRADVNVSVCRPGQYEKYQETQDFSHLGTRCEIKNMNSMRFIQQAIDYEARRQIAILEDGGKVVQETRLYDPDKGETRSMRSKEEAHDYRYFPDPDLLPLEIEQGWVDEIAASMPELPDAKKARFMADYGVTDYDANVLTAELDAAAYFEEVARGRDGKQAANWVINELFGRLNKQGLTIADTPVKAGQLGGVLDLIASGEISGKMAKDLFEILWTEGGDPAEVAAARGMKQVTDTGAIETAVDEIIAANPAQVEKAKANPKLAGWFVGQVIKATGGKANPAAVNQIVAQKLGL</sequence>
<protein>
    <recommendedName>
        <fullName evidence="1">Aspartyl/glutamyl-tRNA(Asn/Gln) amidotransferase subunit B</fullName>
        <shortName evidence="1">Asp/Glu-ADT subunit B</shortName>
        <ecNumber evidence="1">6.3.5.-</ecNumber>
    </recommendedName>
</protein>
<organism>
    <name type="scientific">Cereibacter sphaeroides (strain ATCC 17023 / DSM 158 / JCM 6121 / CCUG 31486 / LMG 2827 / NBRC 12203 / NCIMB 8253 / ATH 2.4.1.)</name>
    <name type="common">Rhodobacter sphaeroides</name>
    <dbReference type="NCBI Taxonomy" id="272943"/>
    <lineage>
        <taxon>Bacteria</taxon>
        <taxon>Pseudomonadati</taxon>
        <taxon>Pseudomonadota</taxon>
        <taxon>Alphaproteobacteria</taxon>
        <taxon>Rhodobacterales</taxon>
        <taxon>Paracoccaceae</taxon>
        <taxon>Cereibacter</taxon>
    </lineage>
</organism>
<comment type="function">
    <text evidence="1">Allows the formation of correctly charged Asn-tRNA(Asn) or Gln-tRNA(Gln) through the transamidation of misacylated Asp-tRNA(Asn) or Glu-tRNA(Gln) in organisms which lack either or both of asparaginyl-tRNA or glutaminyl-tRNA synthetases. The reaction takes place in the presence of glutamine and ATP through an activated phospho-Asp-tRNA(Asn) or phospho-Glu-tRNA(Gln).</text>
</comment>
<comment type="catalytic activity">
    <reaction evidence="1">
        <text>L-glutamyl-tRNA(Gln) + L-glutamine + ATP + H2O = L-glutaminyl-tRNA(Gln) + L-glutamate + ADP + phosphate + H(+)</text>
        <dbReference type="Rhea" id="RHEA:17521"/>
        <dbReference type="Rhea" id="RHEA-COMP:9681"/>
        <dbReference type="Rhea" id="RHEA-COMP:9684"/>
        <dbReference type="ChEBI" id="CHEBI:15377"/>
        <dbReference type="ChEBI" id="CHEBI:15378"/>
        <dbReference type="ChEBI" id="CHEBI:29985"/>
        <dbReference type="ChEBI" id="CHEBI:30616"/>
        <dbReference type="ChEBI" id="CHEBI:43474"/>
        <dbReference type="ChEBI" id="CHEBI:58359"/>
        <dbReference type="ChEBI" id="CHEBI:78520"/>
        <dbReference type="ChEBI" id="CHEBI:78521"/>
        <dbReference type="ChEBI" id="CHEBI:456216"/>
    </reaction>
</comment>
<comment type="catalytic activity">
    <reaction evidence="1">
        <text>L-aspartyl-tRNA(Asn) + L-glutamine + ATP + H2O = L-asparaginyl-tRNA(Asn) + L-glutamate + ADP + phosphate + 2 H(+)</text>
        <dbReference type="Rhea" id="RHEA:14513"/>
        <dbReference type="Rhea" id="RHEA-COMP:9674"/>
        <dbReference type="Rhea" id="RHEA-COMP:9677"/>
        <dbReference type="ChEBI" id="CHEBI:15377"/>
        <dbReference type="ChEBI" id="CHEBI:15378"/>
        <dbReference type="ChEBI" id="CHEBI:29985"/>
        <dbReference type="ChEBI" id="CHEBI:30616"/>
        <dbReference type="ChEBI" id="CHEBI:43474"/>
        <dbReference type="ChEBI" id="CHEBI:58359"/>
        <dbReference type="ChEBI" id="CHEBI:78515"/>
        <dbReference type="ChEBI" id="CHEBI:78516"/>
        <dbReference type="ChEBI" id="CHEBI:456216"/>
    </reaction>
</comment>
<comment type="subunit">
    <text evidence="1">Heterotrimer of A, B and C subunits.</text>
</comment>
<comment type="similarity">
    <text evidence="1">Belongs to the GatB/GatE family. GatB subfamily.</text>
</comment>